<evidence type="ECO:0000255" key="1">
    <source>
        <dbReference type="HAMAP-Rule" id="MF_00386"/>
    </source>
</evidence>
<organism>
    <name type="scientific">Pseudomonas syringae pv. syringae (strain B728a)</name>
    <dbReference type="NCBI Taxonomy" id="205918"/>
    <lineage>
        <taxon>Bacteria</taxon>
        <taxon>Pseudomonadati</taxon>
        <taxon>Pseudomonadota</taxon>
        <taxon>Gammaproteobacteria</taxon>
        <taxon>Pseudomonadales</taxon>
        <taxon>Pseudomonadaceae</taxon>
        <taxon>Pseudomonas</taxon>
        <taxon>Pseudomonas syringae</taxon>
    </lineage>
</organism>
<accession>Q4ZL10</accession>
<comment type="function">
    <text evidence="1">Could be involved in insertion of integral membrane proteins into the membrane.</text>
</comment>
<comment type="subcellular location">
    <subcellularLocation>
        <location evidence="1">Cell inner membrane</location>
        <topology evidence="1">Peripheral membrane protein</topology>
        <orientation evidence="1">Cytoplasmic side</orientation>
    </subcellularLocation>
</comment>
<comment type="similarity">
    <text evidence="1">Belongs to the UPF0161 family.</text>
</comment>
<dbReference type="EMBL" id="CP000075">
    <property type="protein sequence ID" value="AAY40162.1"/>
    <property type="molecule type" value="Genomic_DNA"/>
</dbReference>
<dbReference type="RefSeq" id="YP_238200.1">
    <property type="nucleotide sequence ID" value="NC_007005.1"/>
</dbReference>
<dbReference type="STRING" id="205918.Psyr_5135"/>
<dbReference type="KEGG" id="psb:Psyr_5135"/>
<dbReference type="PATRIC" id="fig|205918.7.peg.5296"/>
<dbReference type="eggNOG" id="COG0759">
    <property type="taxonomic scope" value="Bacteria"/>
</dbReference>
<dbReference type="HOGENOM" id="CLU_144811_6_1_6"/>
<dbReference type="OrthoDB" id="9801753at2"/>
<dbReference type="Proteomes" id="UP000000426">
    <property type="component" value="Chromosome"/>
</dbReference>
<dbReference type="GO" id="GO:0005886">
    <property type="term" value="C:plasma membrane"/>
    <property type="evidence" value="ECO:0007669"/>
    <property type="project" value="UniProtKB-SubCell"/>
</dbReference>
<dbReference type="HAMAP" id="MF_00386">
    <property type="entry name" value="UPF0161_YidD"/>
    <property type="match status" value="1"/>
</dbReference>
<dbReference type="InterPro" id="IPR002696">
    <property type="entry name" value="Membr_insert_effic_factor_YidD"/>
</dbReference>
<dbReference type="NCBIfam" id="TIGR00278">
    <property type="entry name" value="membrane protein insertion efficiency factor YidD"/>
    <property type="match status" value="1"/>
</dbReference>
<dbReference type="PANTHER" id="PTHR33383">
    <property type="entry name" value="MEMBRANE PROTEIN INSERTION EFFICIENCY FACTOR-RELATED"/>
    <property type="match status" value="1"/>
</dbReference>
<dbReference type="PANTHER" id="PTHR33383:SF1">
    <property type="entry name" value="MEMBRANE PROTEIN INSERTION EFFICIENCY FACTOR-RELATED"/>
    <property type="match status" value="1"/>
</dbReference>
<dbReference type="Pfam" id="PF01809">
    <property type="entry name" value="YidD"/>
    <property type="match status" value="1"/>
</dbReference>
<dbReference type="SMART" id="SM01234">
    <property type="entry name" value="Haemolytic"/>
    <property type="match status" value="1"/>
</dbReference>
<proteinExistence type="inferred from homology"/>
<sequence length="81" mass="9162">MRKLALVPIQFYRYAISPLMASHCRFYPSCSCYAYEAIENHGLLRGGWLSIRRLGRCHPWNPGGYDPVPAVPTSRSSSMAE</sequence>
<reference key="1">
    <citation type="journal article" date="2005" name="Proc. Natl. Acad. Sci. U.S.A.">
        <title>Comparison of the complete genome sequences of Pseudomonas syringae pv. syringae B728a and pv. tomato DC3000.</title>
        <authorList>
            <person name="Feil H."/>
            <person name="Feil W.S."/>
            <person name="Chain P."/>
            <person name="Larimer F."/>
            <person name="Dibartolo G."/>
            <person name="Copeland A."/>
            <person name="Lykidis A."/>
            <person name="Trong S."/>
            <person name="Nolan M."/>
            <person name="Goltsman E."/>
            <person name="Thiel J."/>
            <person name="Malfatti S."/>
            <person name="Loper J.E."/>
            <person name="Lapidus A."/>
            <person name="Detter J.C."/>
            <person name="Land M."/>
            <person name="Richardson P.M."/>
            <person name="Kyrpides N.C."/>
            <person name="Ivanova N."/>
            <person name="Lindow S.E."/>
        </authorList>
    </citation>
    <scope>NUCLEOTIDE SEQUENCE [LARGE SCALE GENOMIC DNA]</scope>
    <source>
        <strain>B728a</strain>
    </source>
</reference>
<protein>
    <recommendedName>
        <fullName evidence="1">Putative membrane protein insertion efficiency factor</fullName>
    </recommendedName>
</protein>
<name>YIDD_PSEU2</name>
<feature type="chain" id="PRO_0000253146" description="Putative membrane protein insertion efficiency factor">
    <location>
        <begin position="1"/>
        <end position="81"/>
    </location>
</feature>
<gene>
    <name type="ordered locus">Psyr_5135</name>
</gene>
<keyword id="KW-0997">Cell inner membrane</keyword>
<keyword id="KW-1003">Cell membrane</keyword>
<keyword id="KW-0472">Membrane</keyword>